<evidence type="ECO:0000269" key="1">
    <source>
    </source>
</evidence>
<evidence type="ECO:0000269" key="2">
    <source ref="2"/>
</evidence>
<evidence type="ECO:0000305" key="3"/>
<evidence type="ECO:0007829" key="4">
    <source>
        <dbReference type="PDB" id="1WQB"/>
    </source>
</evidence>
<comment type="function">
    <text>Is both paralytic and lethal, when injected into lepidopteran larvae. Is a slower acting toxin, being lethal at 24 hours, but not paralytic at 1 hour post-injection.</text>
</comment>
<comment type="subcellular location">
    <subcellularLocation>
        <location>Secreted</location>
    </subcellularLocation>
</comment>
<comment type="tissue specificity">
    <text>Expressed by the venom gland.</text>
</comment>
<comment type="domain">
    <text>The presence of a 'disulfide through disulfide knot' structurally defines this protein as a knottin.</text>
</comment>
<comment type="toxic dose">
    <text evidence="1">LD(50) is 1.40 mg/kg by subcutaneous injection.</text>
</comment>
<comment type="similarity">
    <text>Belongs to the neurotoxin 14 (magi-1) family.</text>
</comment>
<comment type="similarity">
    <text evidence="3">To aptotoxin III.</text>
</comment>
<keyword id="KW-0002">3D-structure</keyword>
<keyword id="KW-0903">Direct protein sequencing</keyword>
<keyword id="KW-1015">Disulfide bond</keyword>
<keyword id="KW-0960">Knottin</keyword>
<keyword id="KW-0528">Neurotoxin</keyword>
<keyword id="KW-0964">Secreted</keyword>
<keyword id="KW-0800">Toxin</keyword>
<name>TXP7_APOSC</name>
<accession>P49271</accession>
<dbReference type="PIR" id="B44007">
    <property type="entry name" value="B44007"/>
</dbReference>
<dbReference type="PDB" id="1WQB">
    <property type="method" value="NMR"/>
    <property type="chains" value="A=1-32"/>
</dbReference>
<dbReference type="PDBsum" id="1WQB"/>
<dbReference type="SMR" id="P49271"/>
<dbReference type="ArachnoServer" id="AS000408">
    <property type="toxin name" value="U3-cyrtautoxin-As1a"/>
</dbReference>
<dbReference type="GO" id="GO:0005576">
    <property type="term" value="C:extracellular region"/>
    <property type="evidence" value="ECO:0007669"/>
    <property type="project" value="UniProtKB-SubCell"/>
</dbReference>
<dbReference type="GO" id="GO:0090729">
    <property type="term" value="F:toxin activity"/>
    <property type="evidence" value="ECO:0007669"/>
    <property type="project" value="UniProtKB-KW"/>
</dbReference>
<sequence>WLGCARVKEACGPWEWPCCSGLKCDGSECHPQ</sequence>
<organism>
    <name type="scientific">Apomastus schlingeri</name>
    <name type="common">Trap-door spider</name>
    <name type="synonym">Aptostichus schlingeri</name>
    <dbReference type="NCBI Taxonomy" id="12944"/>
    <lineage>
        <taxon>Eukaryota</taxon>
        <taxon>Metazoa</taxon>
        <taxon>Ecdysozoa</taxon>
        <taxon>Arthropoda</taxon>
        <taxon>Chelicerata</taxon>
        <taxon>Arachnida</taxon>
        <taxon>Araneae</taxon>
        <taxon>Mygalomorphae</taxon>
        <taxon>Euctenizidae</taxon>
        <taxon>Apomastus</taxon>
    </lineage>
</organism>
<proteinExistence type="evidence at protein level"/>
<reference key="1">
    <citation type="journal article" date="1992" name="Toxicon">
        <title>Identification of insecticidal peptides from venom of the trap-door spider, Aptostichus schlingeri (Ctenizidae).</title>
        <authorList>
            <person name="Skinner W.S."/>
            <person name="Dennis P.A."/>
            <person name="Li J.P."/>
            <person name="Quistad G.B."/>
        </authorList>
    </citation>
    <scope>PROTEIN SEQUENCE</scope>
    <scope>TOXIC DOSE</scope>
    <source>
        <tissue>Venom</tissue>
    </source>
</reference>
<reference key="2">
    <citation type="submission" date="2005-12" db="PDB data bank">
        <title>Three-dimensional solution structure of aptotoxin-VII, from the venom of a trap-door spider.</title>
        <authorList>
            <person name="Kobayashi K."/>
            <person name="Kim J.-I."/>
            <person name="Sato K."/>
            <person name="Kohno T."/>
        </authorList>
    </citation>
    <scope>STRUCTURE BY NMR</scope>
    <scope>DISULFIDE BONDS</scope>
</reference>
<feature type="peptide" id="PRO_0000044987" description="U3-cyrtautoxin-As1a">
    <location>
        <begin position="1"/>
        <end position="32"/>
    </location>
</feature>
<feature type="disulfide bond" evidence="2">
    <location>
        <begin position="4"/>
        <end position="19"/>
    </location>
</feature>
<feature type="disulfide bond" evidence="2">
    <location>
        <begin position="11"/>
        <end position="24"/>
    </location>
</feature>
<feature type="disulfide bond" evidence="2">
    <location>
        <begin position="18"/>
        <end position="29"/>
    </location>
</feature>
<feature type="strand" evidence="4">
    <location>
        <begin position="13"/>
        <end position="16"/>
    </location>
</feature>
<feature type="strand" evidence="4">
    <location>
        <begin position="23"/>
        <end position="30"/>
    </location>
</feature>
<protein>
    <recommendedName>
        <fullName>U3-cyrtautoxin-As1a</fullName>
        <shortName>U3-CUTX-As1a</shortName>
    </recommendedName>
    <alternativeName>
        <fullName>Aptotoxin VII</fullName>
    </alternativeName>
    <alternativeName>
        <fullName>Aptotoxin-7</fullName>
    </alternativeName>
    <alternativeName>
        <fullName>Paralytic peptide VII</fullName>
        <shortName>PP VII</shortName>
    </alternativeName>
</protein>